<sequence length="238" mass="26598">MRHLHHQTSQTKLWAVIPAAGSGSRFSKTELKQYQYIQDATVIEHTVKRLSQLPLTGYVLAIGKQDTFASTLSFQDKHKAHFCNGGVERVHSVLNALNYLSQIADEDDWVLVHDAARPCVTFECLNTLVKNAIETNQSAILAIPVRDTLKQVNQEQQIEKTVSRELLWQAQTPQIAKIGILKKAIETALKNNLTITDEASALESIGESVQVVMGRSDNIKITYPDDLELARLILQSQN</sequence>
<name>ISPD_ACIBS</name>
<dbReference type="EC" id="2.7.7.60" evidence="1"/>
<dbReference type="EMBL" id="CU468230">
    <property type="protein sequence ID" value="CAP01357.1"/>
    <property type="molecule type" value="Genomic_DNA"/>
</dbReference>
<dbReference type="SMR" id="B0VQH8"/>
<dbReference type="KEGG" id="abm:ABSDF2025"/>
<dbReference type="HOGENOM" id="CLU_061281_3_1_6"/>
<dbReference type="UniPathway" id="UPA00056">
    <property type="reaction ID" value="UER00093"/>
</dbReference>
<dbReference type="Proteomes" id="UP000001741">
    <property type="component" value="Chromosome"/>
</dbReference>
<dbReference type="GO" id="GO:0050518">
    <property type="term" value="F:2-C-methyl-D-erythritol 4-phosphate cytidylyltransferase activity"/>
    <property type="evidence" value="ECO:0007669"/>
    <property type="project" value="UniProtKB-UniRule"/>
</dbReference>
<dbReference type="GO" id="GO:0019288">
    <property type="term" value="P:isopentenyl diphosphate biosynthetic process, methylerythritol 4-phosphate pathway"/>
    <property type="evidence" value="ECO:0007669"/>
    <property type="project" value="UniProtKB-UniRule"/>
</dbReference>
<dbReference type="CDD" id="cd02516">
    <property type="entry name" value="CDP-ME_synthetase"/>
    <property type="match status" value="1"/>
</dbReference>
<dbReference type="FunFam" id="3.90.550.10:FF:000003">
    <property type="entry name" value="2-C-methyl-D-erythritol 4-phosphate cytidylyltransferase"/>
    <property type="match status" value="1"/>
</dbReference>
<dbReference type="Gene3D" id="3.90.550.10">
    <property type="entry name" value="Spore Coat Polysaccharide Biosynthesis Protein SpsA, Chain A"/>
    <property type="match status" value="1"/>
</dbReference>
<dbReference type="HAMAP" id="MF_00108">
    <property type="entry name" value="IspD"/>
    <property type="match status" value="1"/>
</dbReference>
<dbReference type="InterPro" id="IPR001228">
    <property type="entry name" value="IspD"/>
</dbReference>
<dbReference type="InterPro" id="IPR034683">
    <property type="entry name" value="IspD/TarI"/>
</dbReference>
<dbReference type="InterPro" id="IPR050088">
    <property type="entry name" value="IspD/TarI_cytidylyltransf_bact"/>
</dbReference>
<dbReference type="InterPro" id="IPR018294">
    <property type="entry name" value="ISPD_synthase_CS"/>
</dbReference>
<dbReference type="InterPro" id="IPR029044">
    <property type="entry name" value="Nucleotide-diphossugar_trans"/>
</dbReference>
<dbReference type="NCBIfam" id="TIGR00453">
    <property type="entry name" value="ispD"/>
    <property type="match status" value="1"/>
</dbReference>
<dbReference type="PANTHER" id="PTHR32125">
    <property type="entry name" value="2-C-METHYL-D-ERYTHRITOL 4-PHOSPHATE CYTIDYLYLTRANSFERASE, CHLOROPLASTIC"/>
    <property type="match status" value="1"/>
</dbReference>
<dbReference type="PANTHER" id="PTHR32125:SF4">
    <property type="entry name" value="2-C-METHYL-D-ERYTHRITOL 4-PHOSPHATE CYTIDYLYLTRANSFERASE, CHLOROPLASTIC"/>
    <property type="match status" value="1"/>
</dbReference>
<dbReference type="Pfam" id="PF01128">
    <property type="entry name" value="IspD"/>
    <property type="match status" value="1"/>
</dbReference>
<dbReference type="SUPFAM" id="SSF53448">
    <property type="entry name" value="Nucleotide-diphospho-sugar transferases"/>
    <property type="match status" value="1"/>
</dbReference>
<dbReference type="PROSITE" id="PS01295">
    <property type="entry name" value="ISPD"/>
    <property type="match status" value="1"/>
</dbReference>
<proteinExistence type="inferred from homology"/>
<gene>
    <name evidence="1" type="primary">ispD</name>
    <name type="ordered locus">ABSDF2025</name>
</gene>
<evidence type="ECO:0000255" key="1">
    <source>
        <dbReference type="HAMAP-Rule" id="MF_00108"/>
    </source>
</evidence>
<keyword id="KW-0414">Isoprene biosynthesis</keyword>
<keyword id="KW-0548">Nucleotidyltransferase</keyword>
<keyword id="KW-0808">Transferase</keyword>
<reference key="1">
    <citation type="journal article" date="2008" name="PLoS ONE">
        <title>Comparative analysis of Acinetobacters: three genomes for three lifestyles.</title>
        <authorList>
            <person name="Vallenet D."/>
            <person name="Nordmann P."/>
            <person name="Barbe V."/>
            <person name="Poirel L."/>
            <person name="Mangenot S."/>
            <person name="Bataille E."/>
            <person name="Dossat C."/>
            <person name="Gas S."/>
            <person name="Kreimeyer A."/>
            <person name="Lenoble P."/>
            <person name="Oztas S."/>
            <person name="Poulain J."/>
            <person name="Segurens B."/>
            <person name="Robert C."/>
            <person name="Abergel C."/>
            <person name="Claverie J.-M."/>
            <person name="Raoult D."/>
            <person name="Medigue C."/>
            <person name="Weissenbach J."/>
            <person name="Cruveiller S."/>
        </authorList>
    </citation>
    <scope>NUCLEOTIDE SEQUENCE [LARGE SCALE GENOMIC DNA]</scope>
    <source>
        <strain>SDF</strain>
    </source>
</reference>
<feature type="chain" id="PRO_1000094302" description="2-C-methyl-D-erythritol 4-phosphate cytidylyltransferase">
    <location>
        <begin position="1"/>
        <end position="238"/>
    </location>
</feature>
<feature type="site" description="Transition state stabilizer" evidence="1">
    <location>
        <position position="25"/>
    </location>
</feature>
<feature type="site" description="Transition state stabilizer" evidence="1">
    <location>
        <position position="32"/>
    </location>
</feature>
<feature type="site" description="Positions MEP for the nucleophilic attack" evidence="1">
    <location>
        <position position="164"/>
    </location>
</feature>
<feature type="site" description="Positions MEP for the nucleophilic attack" evidence="1">
    <location>
        <position position="220"/>
    </location>
</feature>
<organism>
    <name type="scientific">Acinetobacter baumannii (strain SDF)</name>
    <dbReference type="NCBI Taxonomy" id="509170"/>
    <lineage>
        <taxon>Bacteria</taxon>
        <taxon>Pseudomonadati</taxon>
        <taxon>Pseudomonadota</taxon>
        <taxon>Gammaproteobacteria</taxon>
        <taxon>Moraxellales</taxon>
        <taxon>Moraxellaceae</taxon>
        <taxon>Acinetobacter</taxon>
        <taxon>Acinetobacter calcoaceticus/baumannii complex</taxon>
    </lineage>
</organism>
<protein>
    <recommendedName>
        <fullName evidence="1">2-C-methyl-D-erythritol 4-phosphate cytidylyltransferase</fullName>
        <ecNumber evidence="1">2.7.7.60</ecNumber>
    </recommendedName>
    <alternativeName>
        <fullName evidence="1">4-diphosphocytidyl-2C-methyl-D-erythritol synthase</fullName>
    </alternativeName>
    <alternativeName>
        <fullName evidence="1">MEP cytidylyltransferase</fullName>
        <shortName evidence="1">MCT</shortName>
    </alternativeName>
</protein>
<comment type="function">
    <text evidence="1">Catalyzes the formation of 4-diphosphocytidyl-2-C-methyl-D-erythritol from CTP and 2-C-methyl-D-erythritol 4-phosphate (MEP).</text>
</comment>
<comment type="catalytic activity">
    <reaction evidence="1">
        <text>2-C-methyl-D-erythritol 4-phosphate + CTP + H(+) = 4-CDP-2-C-methyl-D-erythritol + diphosphate</text>
        <dbReference type="Rhea" id="RHEA:13429"/>
        <dbReference type="ChEBI" id="CHEBI:15378"/>
        <dbReference type="ChEBI" id="CHEBI:33019"/>
        <dbReference type="ChEBI" id="CHEBI:37563"/>
        <dbReference type="ChEBI" id="CHEBI:57823"/>
        <dbReference type="ChEBI" id="CHEBI:58262"/>
        <dbReference type="EC" id="2.7.7.60"/>
    </reaction>
</comment>
<comment type="pathway">
    <text evidence="1">Isoprenoid biosynthesis; isopentenyl diphosphate biosynthesis via DXP pathway; isopentenyl diphosphate from 1-deoxy-D-xylulose 5-phosphate: step 2/6.</text>
</comment>
<comment type="similarity">
    <text evidence="1">Belongs to the IspD/TarI cytidylyltransferase family. IspD subfamily.</text>
</comment>
<accession>B0VQH8</accession>